<name>Y1467_BACCQ</name>
<reference key="1">
    <citation type="journal article" date="2009" name="J. Bacteriol.">
        <title>Complete genome sequence of the extremophilic Bacillus cereus strain Q1 with industrial applications.</title>
        <authorList>
            <person name="Xiong Z."/>
            <person name="Jiang Y."/>
            <person name="Qi D."/>
            <person name="Lu H."/>
            <person name="Yang F."/>
            <person name="Yang J."/>
            <person name="Chen L."/>
            <person name="Sun L."/>
            <person name="Xu X."/>
            <person name="Xue Y."/>
            <person name="Zhu Y."/>
            <person name="Jin Q."/>
        </authorList>
    </citation>
    <scope>NUCLEOTIDE SEQUENCE [LARGE SCALE GENOMIC DNA]</scope>
    <source>
        <strain>Q1</strain>
    </source>
</reference>
<gene>
    <name type="ordered locus">BCQ_1467</name>
</gene>
<evidence type="ECO:0000255" key="1">
    <source>
        <dbReference type="HAMAP-Rule" id="MF_00506"/>
    </source>
</evidence>
<sequence length="79" mass="8416">MAKIGVENSLTDVQQALQQQGHEVITINSEHDAQGCDCCVVTGQDSNMMGIADTSIKGSVINAHGLTTDEICQQVESRI</sequence>
<protein>
    <recommendedName>
        <fullName evidence="1">UPF0180 protein BCQ_1467</fullName>
    </recommendedName>
</protein>
<accession>B9IUY4</accession>
<feature type="chain" id="PRO_1000197844" description="UPF0180 protein BCQ_1467">
    <location>
        <begin position="1"/>
        <end position="79"/>
    </location>
</feature>
<comment type="similarity">
    <text evidence="1">Belongs to the UPF0180 family.</text>
</comment>
<proteinExistence type="inferred from homology"/>
<organism>
    <name type="scientific">Bacillus cereus (strain Q1)</name>
    <dbReference type="NCBI Taxonomy" id="361100"/>
    <lineage>
        <taxon>Bacteria</taxon>
        <taxon>Bacillati</taxon>
        <taxon>Bacillota</taxon>
        <taxon>Bacilli</taxon>
        <taxon>Bacillales</taxon>
        <taxon>Bacillaceae</taxon>
        <taxon>Bacillus</taxon>
        <taxon>Bacillus cereus group</taxon>
    </lineage>
</organism>
<dbReference type="EMBL" id="CP000227">
    <property type="protein sequence ID" value="ACM11895.1"/>
    <property type="molecule type" value="Genomic_DNA"/>
</dbReference>
<dbReference type="KEGG" id="bcq:BCQ_1467"/>
<dbReference type="HOGENOM" id="CLU_187365_0_0_9"/>
<dbReference type="Proteomes" id="UP000000441">
    <property type="component" value="Chromosome"/>
</dbReference>
<dbReference type="HAMAP" id="MF_00506">
    <property type="entry name" value="UPF0180"/>
    <property type="match status" value="1"/>
</dbReference>
<dbReference type="InterPro" id="IPR005370">
    <property type="entry name" value="UPF0180"/>
</dbReference>
<dbReference type="NCBIfam" id="NF002845">
    <property type="entry name" value="PRK03094.1"/>
    <property type="match status" value="1"/>
</dbReference>
<dbReference type="Pfam" id="PF03698">
    <property type="entry name" value="UPF0180"/>
    <property type="match status" value="1"/>
</dbReference>